<sequence length="282" mass="30653">MASTAKILVTNDDGIHSPGLRLLYEAVKELGRVYVLAPETPKSASGLGITLHKPLRIGKVKIWGDTMVYITNGTPSDVIYIAIEEFSPRFDVVVSGVNIGDNTSIQVILSSGTIGAAAQAALLGIPGIAFSADIDEASQLEEDRETWENMKRVIRAITSWVLEHGMPEGVDLISVNFPRKVRKDTKVKIAPAARIKFLQKVSVLYDPRGRKYYWLYGTLVEPEPGSDVYVVHVEKAIAITPLSLNVNVKEGEWAAVVENIKPMIQAAESALRAQTSATVSTA</sequence>
<evidence type="ECO:0000255" key="1">
    <source>
        <dbReference type="HAMAP-Rule" id="MF_00060"/>
    </source>
</evidence>
<dbReference type="EC" id="3.1.3.5" evidence="1"/>
<dbReference type="EMBL" id="CP000493">
    <property type="protein sequence ID" value="ABM80919.1"/>
    <property type="molecule type" value="Genomic_DNA"/>
</dbReference>
<dbReference type="RefSeq" id="WP_011822237.1">
    <property type="nucleotide sequence ID" value="NC_008818.1"/>
</dbReference>
<dbReference type="SMR" id="A2BLQ8"/>
<dbReference type="STRING" id="415426.Hbut_1076"/>
<dbReference type="EnsemblBacteria" id="ABM80919">
    <property type="protein sequence ID" value="ABM80919"/>
    <property type="gene ID" value="Hbut_1076"/>
</dbReference>
<dbReference type="GeneID" id="4781562"/>
<dbReference type="KEGG" id="hbu:Hbut_1076"/>
<dbReference type="eggNOG" id="arCOG02303">
    <property type="taxonomic scope" value="Archaea"/>
</dbReference>
<dbReference type="HOGENOM" id="CLU_045192_1_3_2"/>
<dbReference type="OrthoDB" id="14682at2157"/>
<dbReference type="Proteomes" id="UP000002593">
    <property type="component" value="Chromosome"/>
</dbReference>
<dbReference type="GO" id="GO:0005737">
    <property type="term" value="C:cytoplasm"/>
    <property type="evidence" value="ECO:0007669"/>
    <property type="project" value="UniProtKB-SubCell"/>
</dbReference>
<dbReference type="GO" id="GO:0008253">
    <property type="term" value="F:5'-nucleotidase activity"/>
    <property type="evidence" value="ECO:0007669"/>
    <property type="project" value="UniProtKB-UniRule"/>
</dbReference>
<dbReference type="GO" id="GO:0046872">
    <property type="term" value="F:metal ion binding"/>
    <property type="evidence" value="ECO:0007669"/>
    <property type="project" value="UniProtKB-UniRule"/>
</dbReference>
<dbReference type="GO" id="GO:0000166">
    <property type="term" value="F:nucleotide binding"/>
    <property type="evidence" value="ECO:0007669"/>
    <property type="project" value="UniProtKB-KW"/>
</dbReference>
<dbReference type="Gene3D" id="3.40.1210.10">
    <property type="entry name" value="Survival protein SurE-like phosphatase/nucleotidase"/>
    <property type="match status" value="1"/>
</dbReference>
<dbReference type="HAMAP" id="MF_00060">
    <property type="entry name" value="SurE"/>
    <property type="match status" value="1"/>
</dbReference>
<dbReference type="InterPro" id="IPR030048">
    <property type="entry name" value="SurE"/>
</dbReference>
<dbReference type="InterPro" id="IPR002828">
    <property type="entry name" value="SurE-like_Pase/nucleotidase"/>
</dbReference>
<dbReference type="InterPro" id="IPR036523">
    <property type="entry name" value="SurE-like_sf"/>
</dbReference>
<dbReference type="NCBIfam" id="NF010544">
    <property type="entry name" value="PRK13934.1"/>
    <property type="match status" value="1"/>
</dbReference>
<dbReference type="NCBIfam" id="TIGR00087">
    <property type="entry name" value="surE"/>
    <property type="match status" value="1"/>
</dbReference>
<dbReference type="PANTHER" id="PTHR30457">
    <property type="entry name" value="5'-NUCLEOTIDASE SURE"/>
    <property type="match status" value="1"/>
</dbReference>
<dbReference type="PANTHER" id="PTHR30457:SF0">
    <property type="entry name" value="PHOSPHATASE, PUTATIVE (AFU_ORTHOLOGUE AFUA_4G01070)-RELATED"/>
    <property type="match status" value="1"/>
</dbReference>
<dbReference type="Pfam" id="PF01975">
    <property type="entry name" value="SurE"/>
    <property type="match status" value="1"/>
</dbReference>
<dbReference type="SUPFAM" id="SSF64167">
    <property type="entry name" value="SurE-like"/>
    <property type="match status" value="1"/>
</dbReference>
<reference key="1">
    <citation type="journal article" date="2007" name="Archaea">
        <title>The genome of Hyperthermus butylicus: a sulfur-reducing, peptide fermenting, neutrophilic Crenarchaeote growing up to 108 degrees C.</title>
        <authorList>
            <person name="Bruegger K."/>
            <person name="Chen L."/>
            <person name="Stark M."/>
            <person name="Zibat A."/>
            <person name="Redder P."/>
            <person name="Ruepp A."/>
            <person name="Awayez M."/>
            <person name="She Q."/>
            <person name="Garrett R.A."/>
            <person name="Klenk H.-P."/>
        </authorList>
    </citation>
    <scope>NUCLEOTIDE SEQUENCE [LARGE SCALE GENOMIC DNA]</scope>
    <source>
        <strain>DSM 5456 / JCM 9403 / PLM1-5</strain>
    </source>
</reference>
<gene>
    <name evidence="1" type="primary">surE</name>
    <name type="ordered locus">Hbut_1076</name>
</gene>
<accession>A2BLQ8</accession>
<name>SURE_HYPBU</name>
<keyword id="KW-0963">Cytoplasm</keyword>
<keyword id="KW-0378">Hydrolase</keyword>
<keyword id="KW-0479">Metal-binding</keyword>
<keyword id="KW-0547">Nucleotide-binding</keyword>
<keyword id="KW-1185">Reference proteome</keyword>
<comment type="function">
    <text evidence="1">Nucleotidase that shows phosphatase activity on nucleoside 5'-monophosphates.</text>
</comment>
<comment type="catalytic activity">
    <reaction evidence="1">
        <text>a ribonucleoside 5'-phosphate + H2O = a ribonucleoside + phosphate</text>
        <dbReference type="Rhea" id="RHEA:12484"/>
        <dbReference type="ChEBI" id="CHEBI:15377"/>
        <dbReference type="ChEBI" id="CHEBI:18254"/>
        <dbReference type="ChEBI" id="CHEBI:43474"/>
        <dbReference type="ChEBI" id="CHEBI:58043"/>
        <dbReference type="EC" id="3.1.3.5"/>
    </reaction>
</comment>
<comment type="cofactor">
    <cofactor evidence="1">
        <name>a divalent metal cation</name>
        <dbReference type="ChEBI" id="CHEBI:60240"/>
    </cofactor>
    <text evidence="1">Binds 1 divalent metal cation per subunit.</text>
</comment>
<comment type="subcellular location">
    <subcellularLocation>
        <location evidence="1">Cytoplasm</location>
    </subcellularLocation>
</comment>
<comment type="similarity">
    <text evidence="1">Belongs to the SurE nucleotidase family.</text>
</comment>
<protein>
    <recommendedName>
        <fullName evidence="1">5'-nucleotidase SurE</fullName>
        <ecNumber evidence="1">3.1.3.5</ecNumber>
    </recommendedName>
    <alternativeName>
        <fullName evidence="1">Nucleoside 5'-monophosphate phosphohydrolase</fullName>
    </alternativeName>
</protein>
<organism>
    <name type="scientific">Hyperthermus butylicus (strain DSM 5456 / JCM 9403 / PLM1-5)</name>
    <dbReference type="NCBI Taxonomy" id="415426"/>
    <lineage>
        <taxon>Archaea</taxon>
        <taxon>Thermoproteota</taxon>
        <taxon>Thermoprotei</taxon>
        <taxon>Desulfurococcales</taxon>
        <taxon>Pyrodictiaceae</taxon>
        <taxon>Hyperthermus</taxon>
    </lineage>
</organism>
<feature type="chain" id="PRO_0000335291" description="5'-nucleotidase SurE">
    <location>
        <begin position="1"/>
        <end position="282"/>
    </location>
</feature>
<feature type="binding site" evidence="1">
    <location>
        <position position="12"/>
    </location>
    <ligand>
        <name>a divalent metal cation</name>
        <dbReference type="ChEBI" id="CHEBI:60240"/>
    </ligand>
</feature>
<feature type="binding site" evidence="1">
    <location>
        <position position="13"/>
    </location>
    <ligand>
        <name>a divalent metal cation</name>
        <dbReference type="ChEBI" id="CHEBI:60240"/>
    </ligand>
</feature>
<feature type="binding site" evidence="1">
    <location>
        <position position="43"/>
    </location>
    <ligand>
        <name>a divalent metal cation</name>
        <dbReference type="ChEBI" id="CHEBI:60240"/>
    </ligand>
</feature>
<feature type="binding site" evidence="1">
    <location>
        <position position="98"/>
    </location>
    <ligand>
        <name>a divalent metal cation</name>
        <dbReference type="ChEBI" id="CHEBI:60240"/>
    </ligand>
</feature>
<proteinExistence type="inferred from homology"/>